<keyword id="KW-0507">mRNA processing</keyword>
<keyword id="KW-0508">mRNA splicing</keyword>
<keyword id="KW-0539">Nucleus</keyword>
<keyword id="KW-1185">Reference proteome</keyword>
<keyword id="KW-0677">Repeat</keyword>
<keyword id="KW-0694">RNA-binding</keyword>
<protein>
    <recommendedName>
        <fullName>Probable splicing factor ECU05_1440</fullName>
    </recommendedName>
    <alternativeName>
        <fullName>Pre-mRNA-splicing factor ECU05_1440</fullName>
    </alternativeName>
</protein>
<gene>
    <name type="ordered locus">ECU05_1440</name>
</gene>
<proteinExistence type="evidence at protein level"/>
<evidence type="ECO:0000250" key="1"/>
<evidence type="ECO:0000255" key="2">
    <source>
        <dbReference type="PROSITE-ProRule" id="PRU00176"/>
    </source>
</evidence>
<evidence type="ECO:0000256" key="3">
    <source>
        <dbReference type="SAM" id="MobiDB-lite"/>
    </source>
</evidence>
<evidence type="ECO:0000269" key="4">
    <source>
    </source>
</evidence>
<evidence type="ECO:0000305" key="5"/>
<sequence>MQIFIGKIPNHVSEEQIKEYFGQFGEVTDVSLKGTYGFLNFDSEGSITRVLNQRTHSIDGAPISVERANGRKRPLDGEYHDRYMDMGRGGYSPHRDYRGFRNAPYPPMRYESRSPGRYDPRFSDRYGGRSPEYRGDSFRMGDPQRSRDFCEYCNACPIHGMRDMMDSRKRHHMSRDHPNNHLKVVFENIAPNTAIEDFKNFVQDHGFEPSYARLGYSGNHAVFEFKNIEDKDNAMKKLDGAEFNGHILKTRSYLSKDEYKSRERESHMRSELQPTDNGEAEPQGTTTDIYEGIEDAKAEND</sequence>
<feature type="chain" id="PRO_0000383122" description="Probable splicing factor ECU05_1440">
    <location>
        <begin position="1"/>
        <end position="301"/>
    </location>
</feature>
<feature type="domain" description="RRM 1" evidence="2">
    <location>
        <begin position="1"/>
        <end position="70"/>
    </location>
</feature>
<feature type="domain" description="RRM 2" evidence="2">
    <location>
        <begin position="182"/>
        <end position="255"/>
    </location>
</feature>
<feature type="region of interest" description="Disordered" evidence="3">
    <location>
        <begin position="106"/>
        <end position="140"/>
    </location>
</feature>
<feature type="region of interest" description="Disordered" evidence="3">
    <location>
        <begin position="255"/>
        <end position="301"/>
    </location>
</feature>
<feature type="compositionally biased region" description="Basic and acidic residues" evidence="3">
    <location>
        <begin position="110"/>
        <end position="140"/>
    </location>
</feature>
<feature type="compositionally biased region" description="Basic and acidic residues" evidence="3">
    <location>
        <begin position="255"/>
        <end position="270"/>
    </location>
</feature>
<comment type="function">
    <text evidence="1">Plays a role in splicing.</text>
</comment>
<comment type="subcellular location">
    <subcellularLocation>
        <location evidence="1">Nucleus</location>
    </subcellularLocation>
</comment>
<comment type="developmental stage">
    <text evidence="4">Expressed in late sporogonial stages.</text>
</comment>
<comment type="similarity">
    <text evidence="5">Belongs to the splicing factor SR family.</text>
</comment>
<dbReference type="EMBL" id="AL590445">
    <property type="protein sequence ID" value="CAD26664.1"/>
    <property type="molecule type" value="Genomic_DNA"/>
</dbReference>
<dbReference type="RefSeq" id="NP_597487.1">
    <property type="nucleotide sequence ID" value="NM_001041353.1"/>
</dbReference>
<dbReference type="FunCoup" id="Q8SRU2">
    <property type="interactions" value="221"/>
</dbReference>
<dbReference type="GeneID" id="859154"/>
<dbReference type="KEGG" id="ecu:ECU05_1440"/>
<dbReference type="VEuPathDB" id="MicrosporidiaDB:ECU05_1440"/>
<dbReference type="HOGENOM" id="CLU_940185_0_0_1"/>
<dbReference type="InParanoid" id="Q8SRU2"/>
<dbReference type="OMA" id="WNESIID"/>
<dbReference type="OrthoDB" id="1099063at2759"/>
<dbReference type="Proteomes" id="UP000000819">
    <property type="component" value="Chromosome V"/>
</dbReference>
<dbReference type="GO" id="GO:0005737">
    <property type="term" value="C:cytoplasm"/>
    <property type="evidence" value="ECO:0007669"/>
    <property type="project" value="TreeGrafter"/>
</dbReference>
<dbReference type="GO" id="GO:0005634">
    <property type="term" value="C:nucleus"/>
    <property type="evidence" value="ECO:0007669"/>
    <property type="project" value="UniProtKB-SubCell"/>
</dbReference>
<dbReference type="GO" id="GO:0003729">
    <property type="term" value="F:mRNA binding"/>
    <property type="evidence" value="ECO:0007669"/>
    <property type="project" value="TreeGrafter"/>
</dbReference>
<dbReference type="GO" id="GO:0006397">
    <property type="term" value="P:mRNA processing"/>
    <property type="evidence" value="ECO:0007669"/>
    <property type="project" value="UniProtKB-KW"/>
</dbReference>
<dbReference type="GO" id="GO:0008380">
    <property type="term" value="P:RNA splicing"/>
    <property type="evidence" value="ECO:0007669"/>
    <property type="project" value="UniProtKB-KW"/>
</dbReference>
<dbReference type="Gene3D" id="3.30.70.330">
    <property type="match status" value="2"/>
</dbReference>
<dbReference type="InterPro" id="IPR012677">
    <property type="entry name" value="Nucleotide-bd_a/b_plait_sf"/>
</dbReference>
<dbReference type="InterPro" id="IPR035979">
    <property type="entry name" value="RBD_domain_sf"/>
</dbReference>
<dbReference type="InterPro" id="IPR000504">
    <property type="entry name" value="RRM_dom"/>
</dbReference>
<dbReference type="InterPro" id="IPR050374">
    <property type="entry name" value="RRT5_SRSF_SR"/>
</dbReference>
<dbReference type="PANTHER" id="PTHR23003">
    <property type="entry name" value="RNA RECOGNITION MOTIF RRM DOMAIN CONTAINING PROTEIN"/>
    <property type="match status" value="1"/>
</dbReference>
<dbReference type="PANTHER" id="PTHR23003:SF62">
    <property type="entry name" value="SERINE_ARGININE (SR)-TYPE SHUTTLING MRNA BINDING PROTEIN NPL3"/>
    <property type="match status" value="1"/>
</dbReference>
<dbReference type="Pfam" id="PF00076">
    <property type="entry name" value="RRM_1"/>
    <property type="match status" value="1"/>
</dbReference>
<dbReference type="SMART" id="SM00360">
    <property type="entry name" value="RRM"/>
    <property type="match status" value="2"/>
</dbReference>
<dbReference type="SUPFAM" id="SSF54928">
    <property type="entry name" value="RNA-binding domain, RBD"/>
    <property type="match status" value="1"/>
</dbReference>
<dbReference type="PROSITE" id="PS50102">
    <property type="entry name" value="RRM"/>
    <property type="match status" value="1"/>
</dbReference>
<name>SFR_ENCCU</name>
<organism>
    <name type="scientific">Encephalitozoon cuniculi (strain GB-M1)</name>
    <name type="common">Microsporidian parasite</name>
    <dbReference type="NCBI Taxonomy" id="284813"/>
    <lineage>
        <taxon>Eukaryota</taxon>
        <taxon>Fungi</taxon>
        <taxon>Fungi incertae sedis</taxon>
        <taxon>Microsporidia</taxon>
        <taxon>Unikaryonidae</taxon>
        <taxon>Encephalitozoon</taxon>
    </lineage>
</organism>
<reference key="1">
    <citation type="journal article" date="2001" name="Nature">
        <title>Genome sequence and gene compaction of the eukaryote parasite Encephalitozoon cuniculi.</title>
        <authorList>
            <person name="Katinka M.D."/>
            <person name="Duprat S."/>
            <person name="Cornillot E."/>
            <person name="Metenier G."/>
            <person name="Thomarat F."/>
            <person name="Prensier G."/>
            <person name="Barbe V."/>
            <person name="Peyretaillade E."/>
            <person name="Brottier P."/>
            <person name="Wincker P."/>
            <person name="Delbac F."/>
            <person name="El Alaoui H."/>
            <person name="Peyret P."/>
            <person name="Saurin W."/>
            <person name="Gouy M."/>
            <person name="Weissenbach J."/>
            <person name="Vivares C.P."/>
        </authorList>
    </citation>
    <scope>NUCLEOTIDE SEQUENCE [LARGE SCALE GENOMIC DNA]</scope>
    <source>
        <strain>GB-M1</strain>
    </source>
</reference>
<reference key="2">
    <citation type="journal article" date="2006" name="Proteomics">
        <title>Proteomic analysis of the eukaryotic parasite Encephalitozoon cuniculi (microsporidia): a reference map for proteins expressed in late sporogonial stages.</title>
        <authorList>
            <person name="Brosson D."/>
            <person name="Kuhn L."/>
            <person name="Delbac F."/>
            <person name="Garin J."/>
            <person name="Vivares C.P."/>
            <person name="Texier C."/>
        </authorList>
    </citation>
    <scope>IDENTIFICATION BY MASS SPECTROMETRY [LARGE SCALE ANALYSIS]</scope>
    <scope>DEVELOPMENTAL STAGE</scope>
</reference>
<accession>Q8SRU2</accession>